<comment type="function">
    <text evidence="5">Together with methyltransferase Trm7-34, methylates the 2'-O-ribose of nucleotides at position 34 of the anticodon loop of substrate tRNAs.</text>
</comment>
<comment type="subunit">
    <text evidence="3">Interacts with Trm7-34.</text>
</comment>
<comment type="subcellular location">
    <subcellularLocation>
        <location evidence="1">Cytoplasm</location>
    </subcellularLocation>
</comment>
<comment type="disruption phenotype">
    <text evidence="3">RNAi-mediated knockdown impairs small interfering RNA-mediated silencing and leads to derepression of piRNA pathway-mediated transposable element silencing.</text>
</comment>
<comment type="similarity">
    <text evidence="4">Belongs to the WD repeat WDR6 family.</text>
</comment>
<keyword id="KW-0963">Cytoplasm</keyword>
<keyword id="KW-1185">Reference proteome</keyword>
<keyword id="KW-0677">Repeat</keyword>
<keyword id="KW-0819">tRNA processing</keyword>
<keyword id="KW-0853">WD repeat</keyword>
<evidence type="ECO:0000250" key="1">
    <source>
        <dbReference type="UniProtKB" id="Q9NNW5"/>
    </source>
</evidence>
<evidence type="ECO:0000255" key="2"/>
<evidence type="ECO:0000269" key="3">
    <source>
    </source>
</evidence>
<evidence type="ECO:0000305" key="4"/>
<evidence type="ECO:0000305" key="5">
    <source>
    </source>
</evidence>
<evidence type="ECO:0000312" key="6">
    <source>
        <dbReference type="EMBL" id="ACS29260.1"/>
    </source>
</evidence>
<evidence type="ECO:0000312" key="7">
    <source>
        <dbReference type="FlyBase" id="FBgn0053172"/>
    </source>
</evidence>
<evidence type="ECO:0000312" key="8">
    <source>
        <dbReference type="Proteomes" id="UP000000803"/>
    </source>
</evidence>
<accession>Q86B53</accession>
<accession>C4XVK4</accession>
<proteinExistence type="evidence at protein level"/>
<protein>
    <recommendedName>
        <fullName evidence="4">tRNA (34-2'-O)-methyltransferase regulator WDR6</fullName>
    </recommendedName>
</protein>
<reference evidence="8" key="1">
    <citation type="journal article" date="2000" name="Science">
        <title>The genome sequence of Drosophila melanogaster.</title>
        <authorList>
            <person name="Adams M.D."/>
            <person name="Celniker S.E."/>
            <person name="Holt R.A."/>
            <person name="Evans C.A."/>
            <person name="Gocayne J.D."/>
            <person name="Amanatides P.G."/>
            <person name="Scherer S.E."/>
            <person name="Li P.W."/>
            <person name="Hoskins R.A."/>
            <person name="Galle R.F."/>
            <person name="George R.A."/>
            <person name="Lewis S.E."/>
            <person name="Richards S."/>
            <person name="Ashburner M."/>
            <person name="Henderson S.N."/>
            <person name="Sutton G.G."/>
            <person name="Wortman J.R."/>
            <person name="Yandell M.D."/>
            <person name="Zhang Q."/>
            <person name="Chen L.X."/>
            <person name="Brandon R.C."/>
            <person name="Rogers Y.-H.C."/>
            <person name="Blazej R.G."/>
            <person name="Champe M."/>
            <person name="Pfeiffer B.D."/>
            <person name="Wan K.H."/>
            <person name="Doyle C."/>
            <person name="Baxter E.G."/>
            <person name="Helt G."/>
            <person name="Nelson C.R."/>
            <person name="Miklos G.L.G."/>
            <person name="Abril J.F."/>
            <person name="Agbayani A."/>
            <person name="An H.-J."/>
            <person name="Andrews-Pfannkoch C."/>
            <person name="Baldwin D."/>
            <person name="Ballew R.M."/>
            <person name="Basu A."/>
            <person name="Baxendale J."/>
            <person name="Bayraktaroglu L."/>
            <person name="Beasley E.M."/>
            <person name="Beeson K.Y."/>
            <person name="Benos P.V."/>
            <person name="Berman B.P."/>
            <person name="Bhandari D."/>
            <person name="Bolshakov S."/>
            <person name="Borkova D."/>
            <person name="Botchan M.R."/>
            <person name="Bouck J."/>
            <person name="Brokstein P."/>
            <person name="Brottier P."/>
            <person name="Burtis K.C."/>
            <person name="Busam D.A."/>
            <person name="Butler H."/>
            <person name="Cadieu E."/>
            <person name="Center A."/>
            <person name="Chandra I."/>
            <person name="Cherry J.M."/>
            <person name="Cawley S."/>
            <person name="Dahlke C."/>
            <person name="Davenport L.B."/>
            <person name="Davies P."/>
            <person name="de Pablos B."/>
            <person name="Delcher A."/>
            <person name="Deng Z."/>
            <person name="Mays A.D."/>
            <person name="Dew I."/>
            <person name="Dietz S.M."/>
            <person name="Dodson K."/>
            <person name="Doup L.E."/>
            <person name="Downes M."/>
            <person name="Dugan-Rocha S."/>
            <person name="Dunkov B.C."/>
            <person name="Dunn P."/>
            <person name="Durbin K.J."/>
            <person name="Evangelista C.C."/>
            <person name="Ferraz C."/>
            <person name="Ferriera S."/>
            <person name="Fleischmann W."/>
            <person name="Fosler C."/>
            <person name="Gabrielian A.E."/>
            <person name="Garg N.S."/>
            <person name="Gelbart W.M."/>
            <person name="Glasser K."/>
            <person name="Glodek A."/>
            <person name="Gong F."/>
            <person name="Gorrell J.H."/>
            <person name="Gu Z."/>
            <person name="Guan P."/>
            <person name="Harris M."/>
            <person name="Harris N.L."/>
            <person name="Harvey D.A."/>
            <person name="Heiman T.J."/>
            <person name="Hernandez J.R."/>
            <person name="Houck J."/>
            <person name="Hostin D."/>
            <person name="Houston K.A."/>
            <person name="Howland T.J."/>
            <person name="Wei M.-H."/>
            <person name="Ibegwam C."/>
            <person name="Jalali M."/>
            <person name="Kalush F."/>
            <person name="Karpen G.H."/>
            <person name="Ke Z."/>
            <person name="Kennison J.A."/>
            <person name="Ketchum K.A."/>
            <person name="Kimmel B.E."/>
            <person name="Kodira C.D."/>
            <person name="Kraft C.L."/>
            <person name="Kravitz S."/>
            <person name="Kulp D."/>
            <person name="Lai Z."/>
            <person name="Lasko P."/>
            <person name="Lei Y."/>
            <person name="Levitsky A.A."/>
            <person name="Li J.H."/>
            <person name="Li Z."/>
            <person name="Liang Y."/>
            <person name="Lin X."/>
            <person name="Liu X."/>
            <person name="Mattei B."/>
            <person name="McIntosh T.C."/>
            <person name="McLeod M.P."/>
            <person name="McPherson D."/>
            <person name="Merkulov G."/>
            <person name="Milshina N.V."/>
            <person name="Mobarry C."/>
            <person name="Morris J."/>
            <person name="Moshrefi A."/>
            <person name="Mount S.M."/>
            <person name="Moy M."/>
            <person name="Murphy B."/>
            <person name="Murphy L."/>
            <person name="Muzny D.M."/>
            <person name="Nelson D.L."/>
            <person name="Nelson D.R."/>
            <person name="Nelson K.A."/>
            <person name="Nixon K."/>
            <person name="Nusskern D.R."/>
            <person name="Pacleb J.M."/>
            <person name="Palazzolo M."/>
            <person name="Pittman G.S."/>
            <person name="Pan S."/>
            <person name="Pollard J."/>
            <person name="Puri V."/>
            <person name="Reese M.G."/>
            <person name="Reinert K."/>
            <person name="Remington K."/>
            <person name="Saunders R.D.C."/>
            <person name="Scheeler F."/>
            <person name="Shen H."/>
            <person name="Shue B.C."/>
            <person name="Siden-Kiamos I."/>
            <person name="Simpson M."/>
            <person name="Skupski M.P."/>
            <person name="Smith T.J."/>
            <person name="Spier E."/>
            <person name="Spradling A.C."/>
            <person name="Stapleton M."/>
            <person name="Strong R."/>
            <person name="Sun E."/>
            <person name="Svirskas R."/>
            <person name="Tector C."/>
            <person name="Turner R."/>
            <person name="Venter E."/>
            <person name="Wang A.H."/>
            <person name="Wang X."/>
            <person name="Wang Z.-Y."/>
            <person name="Wassarman D.A."/>
            <person name="Weinstock G.M."/>
            <person name="Weissenbach J."/>
            <person name="Williams S.M."/>
            <person name="Woodage T."/>
            <person name="Worley K.C."/>
            <person name="Wu D."/>
            <person name="Yang S."/>
            <person name="Yao Q.A."/>
            <person name="Ye J."/>
            <person name="Yeh R.-F."/>
            <person name="Zaveri J.S."/>
            <person name="Zhan M."/>
            <person name="Zhang G."/>
            <person name="Zhao Q."/>
            <person name="Zheng L."/>
            <person name="Zheng X.H."/>
            <person name="Zhong F.N."/>
            <person name="Zhong W."/>
            <person name="Zhou X."/>
            <person name="Zhu S.C."/>
            <person name="Zhu X."/>
            <person name="Smith H.O."/>
            <person name="Gibbs R.A."/>
            <person name="Myers E.W."/>
            <person name="Rubin G.M."/>
            <person name="Venter J.C."/>
        </authorList>
    </citation>
    <scope>NUCLEOTIDE SEQUENCE [LARGE SCALE GENOMIC DNA]</scope>
    <source>
        <strain>Berkeley</strain>
    </source>
</reference>
<reference evidence="8" key="2">
    <citation type="journal article" date="2002" name="Genome Biol.">
        <title>Annotation of the Drosophila melanogaster euchromatic genome: a systematic review.</title>
        <authorList>
            <person name="Misra S."/>
            <person name="Crosby M.A."/>
            <person name="Mungall C.J."/>
            <person name="Matthews B.B."/>
            <person name="Campbell K.S."/>
            <person name="Hradecky P."/>
            <person name="Huang Y."/>
            <person name="Kaminker J.S."/>
            <person name="Millburn G.H."/>
            <person name="Prochnik S.E."/>
            <person name="Smith C.D."/>
            <person name="Tupy J.L."/>
            <person name="Whitfield E.J."/>
            <person name="Bayraktaroglu L."/>
            <person name="Berman B.P."/>
            <person name="Bettencourt B.R."/>
            <person name="Celniker S.E."/>
            <person name="de Grey A.D.N.J."/>
            <person name="Drysdale R.A."/>
            <person name="Harris N.L."/>
            <person name="Richter J."/>
            <person name="Russo S."/>
            <person name="Schroeder A.J."/>
            <person name="Shu S.Q."/>
            <person name="Stapleton M."/>
            <person name="Yamada C."/>
            <person name="Ashburner M."/>
            <person name="Gelbart W.M."/>
            <person name="Rubin G.M."/>
            <person name="Lewis S.E."/>
        </authorList>
    </citation>
    <scope>GENOME REANNOTATION</scope>
    <source>
        <strain>Berkeley</strain>
    </source>
</reference>
<reference evidence="6" key="3">
    <citation type="submission" date="2009-06" db="EMBL/GenBank/DDBJ databases">
        <authorList>
            <person name="Carlson J."/>
            <person name="Booth B."/>
            <person name="Frise E."/>
            <person name="Sandler J."/>
            <person name="Wan K."/>
            <person name="Yu C."/>
            <person name="Celniker S."/>
        </authorList>
    </citation>
    <scope>NUCLEOTIDE SEQUENCE [LARGE SCALE MRNA]</scope>
</reference>
<reference evidence="4" key="4">
    <citation type="journal article" date="2020" name="Nucleic Acids Res.">
        <title>tRNA 2'-O-methylation by a duo of TRM7/FTSJ1 proteins modulates small RNA silencing in Drosophila.</title>
        <authorList>
            <person name="Angelova M.T."/>
            <person name="Dimitrova D.G."/>
            <person name="Da Silva B."/>
            <person name="Marchand V."/>
            <person name="Jacquier C."/>
            <person name="Achour C."/>
            <person name="Brazane M."/>
            <person name="Goyenvalle C."/>
            <person name="Bourguignon-Igel V."/>
            <person name="Shehzada S."/>
            <person name="Khouider S."/>
            <person name="Lence T."/>
            <person name="Guerineau V."/>
            <person name="Roignant J.Y."/>
            <person name="Antoniewski C."/>
            <person name="Teysset L."/>
            <person name="Bregeon D."/>
            <person name="Motorin Y."/>
            <person name="Schaefer M.R."/>
            <person name="Carre C."/>
        </authorList>
    </citation>
    <scope>FUNCTION</scope>
    <scope>INTERACTION WITH TRM7-34</scope>
    <scope>DISRUPTION PHENOTYPE</scope>
</reference>
<gene>
    <name evidence="7" type="ORF">CG33172</name>
</gene>
<sequence length="998" mass="113207">MVLISDAFGLEISPNGILVGHGDQAVLYSSEPKVELPVQLREGKVRGFAWSSLRKSQRLLLLYSENEYSLIRCTTSSENDLFQLVYEGETRDWINAALFLEDENESEDRKRFVLHTSHSALLYMEYDLTSNADCTVLELARCTDSSILYYTKLHGSSFNKLAIISGNAFGELLVWQTQFPTESDPKSVMKTYPLLLRIEAHNGVIHSIEFDLQSQLLVTTSDDRSVKFWNIQKSGDWTTAEIKPMFSCYGHSSRVMCVVILKIDDRTFVASGGEDSYVCIWSSSGELILKRRQQFGAPIWRLGFSQDAEILYSTSSTGNLVGQNLKEVLNRPKIESTILSSLGDANEFVRNLKFVNNEIIVGLSSLNRLYYTRISPDSSHENKWLMVNDFPSYKRTVLEVFDDIIATCGHRRITLHRYNTNTNDFEQLFDGIRMKGTIRSFQFLSRDRYLVSDNLGYCLLLQTHQLHIESHIALFNNREPWITAALLISEQYLLLGNREGHVMLYCRSSASDDFQLKDSIRYLHGKMGSNFFKLLSLNADNAHVMSGGHEAFLKYLSVRFSDSTLRVSQREGIPLAWVEASPSDDLILGFNDNHIVAWSRRNDILLQLACGGGHRCWDFRLSDGDSQLSIAYVKQKRVYFYRNSLYNAVDNRLKDIEPNNWHVRNCNTLRLITPRNQSDPFILSAGDDNIIKVTQVTNDSLSQRAEMHSHISTVRSLQAIPYKSNGGDSSTWLVFSVGGRSQLCISQLSIDASNKCWISEISSHTLHNVAASKTSTIEARLMAIDVVQHSDGDLFSIYVAGGDGNISHYIWELETPNQLDLKHFVDIQRCPLGIQWIASKGMLLVSTTNGEVYGFDRTLETTYFQLQLHVTGINTIDIYVDRHLLHILSGGDDESIKYTVLNLNNNNVEQKIEYLGLHNAQVNALAIHCPTKSVAASELFAYTCSIDRQIYRIDLSTHKYKRVGYTCIADVKGMLLDEHQRMYFYGCGLQTMSISNIL</sequence>
<feature type="chain" id="PRO_0000458464" description="tRNA (34-2'-O)-methyltransferase regulator WDR6">
    <location>
        <begin position="1"/>
        <end position="998"/>
    </location>
</feature>
<feature type="repeat" description="WD 1" evidence="2">
    <location>
        <begin position="148"/>
        <end position="185"/>
    </location>
</feature>
<feature type="repeat" description="WD 2" evidence="2">
    <location>
        <begin position="200"/>
        <end position="239"/>
    </location>
</feature>
<feature type="repeat" description="WD 3" evidence="2">
    <location>
        <begin position="250"/>
        <end position="291"/>
    </location>
</feature>
<feature type="repeat" description="WD 4" evidence="2">
    <location>
        <begin position="294"/>
        <end position="333"/>
    </location>
</feature>
<feature type="repeat" description="WD 5" evidence="2">
    <location>
        <begin position="476"/>
        <end position="515"/>
    </location>
</feature>
<feature type="repeat" description="WD 6" evidence="2">
    <location>
        <begin position="527"/>
        <end position="566"/>
    </location>
</feature>
<feature type="repeat" description="WD 7" evidence="2">
    <location>
        <begin position="567"/>
        <end position="608"/>
    </location>
</feature>
<feature type="repeat" description="WD 8" evidence="2">
    <location>
        <begin position="664"/>
        <end position="704"/>
    </location>
</feature>
<feature type="repeat" description="WD 9" evidence="2">
    <location>
        <begin position="779"/>
        <end position="821"/>
    </location>
</feature>
<feature type="repeat" description="WD 10" evidence="2">
    <location>
        <begin position="826"/>
        <end position="865"/>
    </location>
</feature>
<feature type="repeat" description="WD 11" evidence="2">
    <location>
        <begin position="868"/>
        <end position="911"/>
    </location>
</feature>
<organism evidence="8">
    <name type="scientific">Drosophila melanogaster</name>
    <name type="common">Fruit fly</name>
    <dbReference type="NCBI Taxonomy" id="7227"/>
    <lineage>
        <taxon>Eukaryota</taxon>
        <taxon>Metazoa</taxon>
        <taxon>Ecdysozoa</taxon>
        <taxon>Arthropoda</taxon>
        <taxon>Hexapoda</taxon>
        <taxon>Insecta</taxon>
        <taxon>Pterygota</taxon>
        <taxon>Neoptera</taxon>
        <taxon>Endopterygota</taxon>
        <taxon>Diptera</taxon>
        <taxon>Brachycera</taxon>
        <taxon>Muscomorpha</taxon>
        <taxon>Ephydroidea</taxon>
        <taxon>Drosophilidae</taxon>
        <taxon>Drosophila</taxon>
        <taxon>Sophophora</taxon>
    </lineage>
</organism>
<name>WDR6_DROME</name>
<dbReference type="EMBL" id="AE014298">
    <property type="protein sequence ID" value="AAO41658.2"/>
    <property type="molecule type" value="Genomic_DNA"/>
</dbReference>
<dbReference type="EMBL" id="BT088808">
    <property type="protein sequence ID" value="ACS29260.1"/>
    <property type="molecule type" value="mRNA"/>
</dbReference>
<dbReference type="RefSeq" id="NP_788911.2">
    <property type="nucleotide sequence ID" value="NM_176738.2"/>
</dbReference>
<dbReference type="FunCoup" id="Q86B53">
    <property type="interactions" value="1079"/>
</dbReference>
<dbReference type="IntAct" id="Q86B53">
    <property type="interactions" value="2"/>
</dbReference>
<dbReference type="STRING" id="7227.FBpp0300435"/>
<dbReference type="PaxDb" id="7227-FBpp0300435"/>
<dbReference type="EnsemblMetazoa" id="FBtr0308092">
    <property type="protein sequence ID" value="FBpp0300435"/>
    <property type="gene ID" value="FBgn0053172"/>
</dbReference>
<dbReference type="GeneID" id="32526"/>
<dbReference type="KEGG" id="dme:Dmel_CG33172"/>
<dbReference type="UCSC" id="CG33172-RA">
    <property type="organism name" value="d. melanogaster"/>
</dbReference>
<dbReference type="AGR" id="FB:FBgn0053172"/>
<dbReference type="FlyBase" id="FBgn0053172">
    <property type="gene designation" value="CG33172"/>
</dbReference>
<dbReference type="VEuPathDB" id="VectorBase:FBgn0053172"/>
<dbReference type="eggNOG" id="KOG0974">
    <property type="taxonomic scope" value="Eukaryota"/>
</dbReference>
<dbReference type="GeneTree" id="ENSGT00420000029923"/>
<dbReference type="HOGENOM" id="CLU_002615_0_1_1"/>
<dbReference type="OMA" id="IIVWSCF"/>
<dbReference type="OrthoDB" id="5594999at2759"/>
<dbReference type="Reactome" id="R-DME-9013420">
    <property type="pathway name" value="RHOU GTPase cycle"/>
</dbReference>
<dbReference type="Reactome" id="R-DME-9013424">
    <property type="pathway name" value="RHOV GTPase cycle"/>
</dbReference>
<dbReference type="BioGRID-ORCS" id="32526">
    <property type="hits" value="0 hits in 1 CRISPR screen"/>
</dbReference>
<dbReference type="GenomeRNAi" id="32526"/>
<dbReference type="PRO" id="PR:Q86B53"/>
<dbReference type="Proteomes" id="UP000000803">
    <property type="component" value="Chromosome X"/>
</dbReference>
<dbReference type="Bgee" id="FBgn0053172">
    <property type="expression patterns" value="Expressed in germline cell (Drosophila) in post-embryonic organism and 25 other cell types or tissues"/>
</dbReference>
<dbReference type="GO" id="GO:0005737">
    <property type="term" value="C:cytoplasm"/>
    <property type="evidence" value="ECO:0000250"/>
    <property type="project" value="FlyBase"/>
</dbReference>
<dbReference type="GO" id="GO:0030234">
    <property type="term" value="F:enzyme regulator activity"/>
    <property type="evidence" value="ECO:0000250"/>
    <property type="project" value="UniProtKB"/>
</dbReference>
<dbReference type="GO" id="GO:0003723">
    <property type="term" value="F:RNA binding"/>
    <property type="evidence" value="ECO:0000250"/>
    <property type="project" value="FlyBase"/>
</dbReference>
<dbReference type="GO" id="GO:0000049">
    <property type="term" value="F:tRNA binding"/>
    <property type="evidence" value="ECO:0000250"/>
    <property type="project" value="UniProtKB"/>
</dbReference>
<dbReference type="GO" id="GO:0008285">
    <property type="term" value="P:negative regulation of cell population proliferation"/>
    <property type="evidence" value="ECO:0000250"/>
    <property type="project" value="FlyBase"/>
</dbReference>
<dbReference type="GO" id="GO:0030488">
    <property type="term" value="P:tRNA methylation"/>
    <property type="evidence" value="ECO:0000318"/>
    <property type="project" value="GO_Central"/>
</dbReference>
<dbReference type="GO" id="GO:0002130">
    <property type="term" value="P:wobble position ribose methylation"/>
    <property type="evidence" value="ECO:0000250"/>
    <property type="project" value="UniProtKB"/>
</dbReference>
<dbReference type="Gene3D" id="2.130.10.10">
    <property type="entry name" value="YVTN repeat-like/Quinoprotein amine dehydrogenase"/>
    <property type="match status" value="3"/>
</dbReference>
<dbReference type="InterPro" id="IPR051973">
    <property type="entry name" value="tRNA_Anticodon_Mtase-Reg"/>
</dbReference>
<dbReference type="InterPro" id="IPR015943">
    <property type="entry name" value="WD40/YVTN_repeat-like_dom_sf"/>
</dbReference>
<dbReference type="InterPro" id="IPR019775">
    <property type="entry name" value="WD40_repeat_CS"/>
</dbReference>
<dbReference type="InterPro" id="IPR036322">
    <property type="entry name" value="WD40_repeat_dom_sf"/>
</dbReference>
<dbReference type="InterPro" id="IPR001680">
    <property type="entry name" value="WD40_rpt"/>
</dbReference>
<dbReference type="PANTHER" id="PTHR14344">
    <property type="entry name" value="WD REPEAT PROTEIN"/>
    <property type="match status" value="1"/>
</dbReference>
<dbReference type="PANTHER" id="PTHR14344:SF3">
    <property type="entry name" value="WD REPEAT-CONTAINING PROTEIN 6"/>
    <property type="match status" value="1"/>
</dbReference>
<dbReference type="Pfam" id="PF00400">
    <property type="entry name" value="WD40"/>
    <property type="match status" value="2"/>
</dbReference>
<dbReference type="SMART" id="SM00320">
    <property type="entry name" value="WD40"/>
    <property type="match status" value="3"/>
</dbReference>
<dbReference type="SUPFAM" id="SSF50978">
    <property type="entry name" value="WD40 repeat-like"/>
    <property type="match status" value="2"/>
</dbReference>
<dbReference type="PROSITE" id="PS00678">
    <property type="entry name" value="WD_REPEATS_1"/>
    <property type="match status" value="1"/>
</dbReference>
<dbReference type="PROSITE" id="PS50082">
    <property type="entry name" value="WD_REPEATS_2"/>
    <property type="match status" value="1"/>
</dbReference>
<dbReference type="PROSITE" id="PS50294">
    <property type="entry name" value="WD_REPEATS_REGION"/>
    <property type="match status" value="1"/>
</dbReference>